<sequence>MINSTSTQPPDESCSQNLLITQQIIPVLYCMVFIAGILLNGVSGWIFFYVPSSKSFIIYLKNIVIADFVMSLTFPFKILGDSGLGPWQLNVFVCRVSAVLFYVNMYVSIVFFGLISFDRYYKIVKPLWTSFIQSVSYSKLLSVIVWMLMLLLAVPNIILTNQSVREVTQIKCIELKSELGRKWHKASNYIFVAIFWIVFLLLIVFYTAITKKIFKSHLKSSRNSTSVKKKSSRNIFSIVFVFFVCFVPYHIARIPYTKSQTEAHYSCQSKEILRYMKEFTLLLSAANVCLDPIIYFFLCQPFREILCKKLHIPLKAQNDLDISRIKRGNTTLESTDTL</sequence>
<name>P2Y14_HUMAN</name>
<organism>
    <name type="scientific">Homo sapiens</name>
    <name type="common">Human</name>
    <dbReference type="NCBI Taxonomy" id="9606"/>
    <lineage>
        <taxon>Eukaryota</taxon>
        <taxon>Metazoa</taxon>
        <taxon>Chordata</taxon>
        <taxon>Craniata</taxon>
        <taxon>Vertebrata</taxon>
        <taxon>Euteleostomi</taxon>
        <taxon>Mammalia</taxon>
        <taxon>Eutheria</taxon>
        <taxon>Euarchontoglires</taxon>
        <taxon>Primates</taxon>
        <taxon>Haplorrhini</taxon>
        <taxon>Catarrhini</taxon>
        <taxon>Hominidae</taxon>
        <taxon>Homo</taxon>
    </lineage>
</organism>
<gene>
    <name type="primary">P2RY14</name>
    <name type="synonym">GPR105</name>
    <name type="synonym">KIAA0001</name>
</gene>
<reference key="1">
    <citation type="journal article" date="2001" name="Am. J. Hum. Genet.">
        <title>Mutations in a novel gene with transmembrane domains underlie Usher syndrome type 3.</title>
        <authorList>
            <person name="Joensuu T."/>
            <person name="Haemaelaeinen R."/>
            <person name="Yuan B."/>
            <person name="Johnson C."/>
            <person name="Tegelberg S."/>
            <person name="Gasparini P."/>
            <person name="Zelante L."/>
            <person name="Pirvola U."/>
            <person name="Pakarinen L."/>
            <person name="Lehesjoki A.-E."/>
            <person name="de la Chapelle A."/>
            <person name="Sankila E.-M."/>
        </authorList>
    </citation>
    <scope>NUCLEOTIDE SEQUENCE [GENOMIC DNA]</scope>
</reference>
<reference key="2">
    <citation type="journal article" date="1994" name="DNA Res.">
        <title>Prediction of the coding sequences of unidentified human genes. I. The coding sequences of 40 new genes (KIAA0001-KIAA0040) deduced by analysis of randomly sampled cDNA clones from human immature myeloid cell line KG-1.</title>
        <authorList>
            <person name="Nomura N."/>
            <person name="Miyajima N."/>
            <person name="Sazuka T."/>
            <person name="Tanaka A."/>
            <person name="Kawarabayasi Y."/>
            <person name="Sato S."/>
            <person name="Nagase T."/>
            <person name="Seki N."/>
            <person name="Ishikawa K."/>
            <person name="Tabata S."/>
        </authorList>
    </citation>
    <scope>NUCLEOTIDE SEQUENCE [LARGE SCALE MRNA]</scope>
    <source>
        <tissue>Bone marrow</tissue>
    </source>
</reference>
<reference key="3">
    <citation type="journal article" date="2004" name="Genome Res.">
        <title>The status, quality, and expansion of the NIH full-length cDNA project: the Mammalian Gene Collection (MGC).</title>
        <authorList>
            <consortium name="The MGC Project Team"/>
        </authorList>
    </citation>
    <scope>NUCLEOTIDE SEQUENCE [LARGE SCALE MRNA]</scope>
    <source>
        <tissue>Testis</tissue>
    </source>
</reference>
<reference key="4">
    <citation type="journal article" date="2000" name="J. Biol. Chem.">
        <title>A G protein-coupled receptor for UDP-glucose.</title>
        <authorList>
            <person name="Chambers J.K."/>
            <person name="Macdonald L.E."/>
            <person name="Sarau H.M."/>
            <person name="Ames R.S."/>
            <person name="Freeman K."/>
            <person name="Foley J.J."/>
            <person name="Zhu Y."/>
            <person name="McLaughlin M.M."/>
            <person name="Murdock P."/>
            <person name="McMillan L."/>
            <person name="Trill J."/>
            <person name="Swift A."/>
            <person name="Aiyar N."/>
            <person name="Taylor P."/>
            <person name="Vawter L."/>
            <person name="Naheed S."/>
            <person name="Szekeres P."/>
            <person name="Hervieu G."/>
            <person name="Scott C."/>
            <person name="Watson J.M."/>
            <person name="Murphy A.J."/>
            <person name="Duzic E."/>
            <person name="Klein C."/>
            <person name="Bergsma D.J."/>
            <person name="Wilson S."/>
            <person name="Livi G.P."/>
        </authorList>
    </citation>
    <scope>FUNCTION</scope>
</reference>
<reference key="5">
    <citation type="journal article" date="2006" name="Science">
        <title>The consensus coding sequences of human breast and colorectal cancers.</title>
        <authorList>
            <person name="Sjoeblom T."/>
            <person name="Jones S."/>
            <person name="Wood L.D."/>
            <person name="Parsons D.W."/>
            <person name="Lin J."/>
            <person name="Barber T.D."/>
            <person name="Mandelker D."/>
            <person name="Leary R.J."/>
            <person name="Ptak J."/>
            <person name="Silliman N."/>
            <person name="Szabo S."/>
            <person name="Buckhaults P."/>
            <person name="Farrell C."/>
            <person name="Meeh P."/>
            <person name="Markowitz S.D."/>
            <person name="Willis J."/>
            <person name="Dawson D."/>
            <person name="Willson J.K.V."/>
            <person name="Gazdar A.F."/>
            <person name="Hartigan J."/>
            <person name="Wu L."/>
            <person name="Liu C."/>
            <person name="Parmigiani G."/>
            <person name="Park B.H."/>
            <person name="Bachman K.E."/>
            <person name="Papadopoulos N."/>
            <person name="Vogelstein B."/>
            <person name="Kinzler K.W."/>
            <person name="Velculescu V.E."/>
        </authorList>
    </citation>
    <scope>VARIANT [LARGE SCALE ANALYSIS] PRO-140</scope>
</reference>
<accession>Q15391</accession>
<accession>Q8IYT7</accession>
<evidence type="ECO:0000255" key="1"/>
<evidence type="ECO:0000255" key="2">
    <source>
        <dbReference type="PROSITE-ProRule" id="PRU00521"/>
    </source>
</evidence>
<evidence type="ECO:0000269" key="3">
    <source>
    </source>
</evidence>
<evidence type="ECO:0000269" key="4">
    <source>
    </source>
</evidence>
<evidence type="ECO:0000305" key="5"/>
<feature type="chain" id="PRO_0000070044" description="P2Y purinoceptor 14">
    <location>
        <begin position="1"/>
        <end position="338"/>
    </location>
</feature>
<feature type="topological domain" description="Extracellular" evidence="1">
    <location>
        <begin position="1"/>
        <end position="29"/>
    </location>
</feature>
<feature type="transmembrane region" description="Helical; Name=1" evidence="1">
    <location>
        <begin position="30"/>
        <end position="50"/>
    </location>
</feature>
<feature type="topological domain" description="Cytoplasmic" evidence="1">
    <location>
        <begin position="51"/>
        <end position="55"/>
    </location>
</feature>
<feature type="transmembrane region" description="Helical; Name=2" evidence="1">
    <location>
        <begin position="56"/>
        <end position="76"/>
    </location>
</feature>
<feature type="topological domain" description="Extracellular" evidence="1">
    <location>
        <begin position="77"/>
        <end position="96"/>
    </location>
</feature>
<feature type="transmembrane region" description="Helical; Name=3" evidence="1">
    <location>
        <begin position="97"/>
        <end position="117"/>
    </location>
</feature>
<feature type="topological domain" description="Cytoplasmic" evidence="1">
    <location>
        <begin position="118"/>
        <end position="139"/>
    </location>
</feature>
<feature type="transmembrane region" description="Helical; Name=4" evidence="1">
    <location>
        <begin position="140"/>
        <end position="160"/>
    </location>
</feature>
<feature type="topological domain" description="Extracellular" evidence="1">
    <location>
        <begin position="161"/>
        <end position="188"/>
    </location>
</feature>
<feature type="transmembrane region" description="Helical; Name=5" evidence="1">
    <location>
        <begin position="189"/>
        <end position="209"/>
    </location>
</feature>
<feature type="topological domain" description="Cytoplasmic" evidence="1">
    <location>
        <begin position="210"/>
        <end position="234"/>
    </location>
</feature>
<feature type="transmembrane region" description="Helical; Name=6" evidence="1">
    <location>
        <begin position="235"/>
        <end position="255"/>
    </location>
</feature>
<feature type="topological domain" description="Extracellular" evidence="1">
    <location>
        <begin position="256"/>
        <end position="278"/>
    </location>
</feature>
<feature type="transmembrane region" description="Helical; Name=7" evidence="1">
    <location>
        <begin position="279"/>
        <end position="299"/>
    </location>
</feature>
<feature type="topological domain" description="Cytoplasmic" evidence="1">
    <location>
        <begin position="300"/>
        <end position="338"/>
    </location>
</feature>
<feature type="glycosylation site" description="N-linked (GlcNAc...) asparagine" evidence="1">
    <location>
        <position position="3"/>
    </location>
</feature>
<feature type="glycosylation site" description="N-linked (GlcNAc...) asparagine" evidence="1">
    <location>
        <position position="161"/>
    </location>
</feature>
<feature type="disulfide bond" evidence="2">
    <location>
        <begin position="94"/>
        <end position="172"/>
    </location>
</feature>
<feature type="sequence variant" id="VAR_035767" description="In a colorectal cancer sample; somatic mutation." evidence="4">
    <original>L</original>
    <variation>P</variation>
    <location>
        <position position="140"/>
    </location>
</feature>
<feature type="sequence conflict" description="In Ref. 3; AAH34989." evidence="5" ref="3">
    <original>K</original>
    <variation>E</variation>
    <location>
        <position position="54"/>
    </location>
</feature>
<keyword id="KW-1003">Cell membrane</keyword>
<keyword id="KW-1015">Disulfide bond</keyword>
<keyword id="KW-0297">G-protein coupled receptor</keyword>
<keyword id="KW-0325">Glycoprotein</keyword>
<keyword id="KW-0472">Membrane</keyword>
<keyword id="KW-1267">Proteomics identification</keyword>
<keyword id="KW-0675">Receptor</keyword>
<keyword id="KW-1185">Reference proteome</keyword>
<keyword id="KW-0807">Transducer</keyword>
<keyword id="KW-0812">Transmembrane</keyword>
<keyword id="KW-1133">Transmembrane helix</keyword>
<dbReference type="EMBL" id="AF456925">
    <property type="protein sequence ID" value="AAL47764.1"/>
    <property type="molecule type" value="Genomic_DNA"/>
</dbReference>
<dbReference type="EMBL" id="D13626">
    <property type="protein sequence ID" value="BAA02791.2"/>
    <property type="status" value="ALT_INIT"/>
    <property type="molecule type" value="mRNA"/>
</dbReference>
<dbReference type="EMBL" id="BC034989">
    <property type="protein sequence ID" value="AAH34989.1"/>
    <property type="molecule type" value="mRNA"/>
</dbReference>
<dbReference type="CCDS" id="CCDS3156.1"/>
<dbReference type="RefSeq" id="NP_001074924.1">
    <property type="nucleotide sequence ID" value="NM_001081455.2"/>
</dbReference>
<dbReference type="RefSeq" id="NP_055694.3">
    <property type="nucleotide sequence ID" value="NM_014879.3"/>
</dbReference>
<dbReference type="RefSeq" id="XP_005247979.1">
    <property type="nucleotide sequence ID" value="XM_005247922.4"/>
</dbReference>
<dbReference type="RefSeq" id="XP_005247980.1">
    <property type="nucleotide sequence ID" value="XM_005247923.4"/>
</dbReference>
<dbReference type="RefSeq" id="XP_011511642.1">
    <property type="nucleotide sequence ID" value="XM_011513340.4"/>
</dbReference>
<dbReference type="RefSeq" id="XP_016863072.1">
    <property type="nucleotide sequence ID" value="XM_017007583.3"/>
</dbReference>
<dbReference type="RefSeq" id="XP_054204618.1">
    <property type="nucleotide sequence ID" value="XM_054348643.1"/>
</dbReference>
<dbReference type="RefSeq" id="XP_054204619.1">
    <property type="nucleotide sequence ID" value="XM_054348644.1"/>
</dbReference>
<dbReference type="RefSeq" id="XP_054204620.1">
    <property type="nucleotide sequence ID" value="XM_054348645.1"/>
</dbReference>
<dbReference type="RefSeq" id="XP_054204621.1">
    <property type="nucleotide sequence ID" value="XM_054348646.1"/>
</dbReference>
<dbReference type="SMR" id="Q15391"/>
<dbReference type="BioGRID" id="115260">
    <property type="interactions" value="7"/>
</dbReference>
<dbReference type="FunCoup" id="Q15391">
    <property type="interactions" value="852"/>
</dbReference>
<dbReference type="IntAct" id="Q15391">
    <property type="interactions" value="1"/>
</dbReference>
<dbReference type="STRING" id="9606.ENSP00000308361"/>
<dbReference type="BindingDB" id="Q15391"/>
<dbReference type="ChEMBL" id="CHEMBL4518"/>
<dbReference type="DrugBank" id="DB01069">
    <property type="generic name" value="Promethazine"/>
</dbReference>
<dbReference type="GuidetoPHARMACOLOGY" id="330"/>
<dbReference type="TCDB" id="9.A.14.13.46">
    <property type="family name" value="the g-protein-coupled receptor (gpcr) family"/>
</dbReference>
<dbReference type="GlyCosmos" id="Q15391">
    <property type="glycosylation" value="2 sites, No reported glycans"/>
</dbReference>
<dbReference type="GlyGen" id="Q15391">
    <property type="glycosylation" value="2 sites"/>
</dbReference>
<dbReference type="iPTMnet" id="Q15391"/>
<dbReference type="PhosphoSitePlus" id="Q15391"/>
<dbReference type="BioMuta" id="P2RY14"/>
<dbReference type="DMDM" id="3122322"/>
<dbReference type="MassIVE" id="Q15391"/>
<dbReference type="PaxDb" id="9606-ENSP00000308361"/>
<dbReference type="PeptideAtlas" id="Q15391"/>
<dbReference type="ProteomicsDB" id="60561"/>
<dbReference type="Antibodypedia" id="18296">
    <property type="antibodies" value="246 antibodies from 30 providers"/>
</dbReference>
<dbReference type="DNASU" id="9934"/>
<dbReference type="Ensembl" id="ENST00000309170.8">
    <property type="protein sequence ID" value="ENSP00000308361.3"/>
    <property type="gene ID" value="ENSG00000174944.9"/>
</dbReference>
<dbReference type="Ensembl" id="ENST00000424796.6">
    <property type="protein sequence ID" value="ENSP00000408733.2"/>
    <property type="gene ID" value="ENSG00000174944.9"/>
</dbReference>
<dbReference type="GeneID" id="9934"/>
<dbReference type="KEGG" id="hsa:9934"/>
<dbReference type="MANE-Select" id="ENST00000309170.8">
    <property type="protein sequence ID" value="ENSP00000308361.3"/>
    <property type="RefSeq nucleotide sequence ID" value="NM_014879.4"/>
    <property type="RefSeq protein sequence ID" value="NP_055694.3"/>
</dbReference>
<dbReference type="UCSC" id="uc003eyr.2">
    <property type="organism name" value="human"/>
</dbReference>
<dbReference type="AGR" id="HGNC:16442"/>
<dbReference type="CTD" id="9934"/>
<dbReference type="DisGeNET" id="9934"/>
<dbReference type="GeneCards" id="P2RY14"/>
<dbReference type="HGNC" id="HGNC:16442">
    <property type="gene designation" value="P2RY14"/>
</dbReference>
<dbReference type="HPA" id="ENSG00000174944">
    <property type="expression patterns" value="Tissue enhanced (placenta)"/>
</dbReference>
<dbReference type="MIM" id="610116">
    <property type="type" value="gene"/>
</dbReference>
<dbReference type="neXtProt" id="NX_Q15391"/>
<dbReference type="OpenTargets" id="ENSG00000174944"/>
<dbReference type="PharmGKB" id="PA28853"/>
<dbReference type="VEuPathDB" id="HostDB:ENSG00000174944"/>
<dbReference type="eggNOG" id="ENOG502R537">
    <property type="taxonomic scope" value="Eukaryota"/>
</dbReference>
<dbReference type="GeneTree" id="ENSGT01110000267255"/>
<dbReference type="HOGENOM" id="CLU_009579_8_2_1"/>
<dbReference type="InParanoid" id="Q15391"/>
<dbReference type="OMA" id="FVHTVNY"/>
<dbReference type="OrthoDB" id="6163051at2759"/>
<dbReference type="PAN-GO" id="Q15391">
    <property type="GO annotations" value="2 GO annotations based on evolutionary models"/>
</dbReference>
<dbReference type="PhylomeDB" id="Q15391"/>
<dbReference type="TreeFam" id="TF330969"/>
<dbReference type="PathwayCommons" id="Q15391"/>
<dbReference type="Reactome" id="R-HSA-417957">
    <property type="pathway name" value="P2Y receptors"/>
</dbReference>
<dbReference type="Reactome" id="R-HSA-418594">
    <property type="pathway name" value="G alpha (i) signalling events"/>
</dbReference>
<dbReference type="SignaLink" id="Q15391"/>
<dbReference type="SIGNOR" id="Q15391"/>
<dbReference type="BioGRID-ORCS" id="9934">
    <property type="hits" value="17 hits in 1139 CRISPR screens"/>
</dbReference>
<dbReference type="GenomeRNAi" id="9934"/>
<dbReference type="Pharos" id="Q15391">
    <property type="development level" value="Tchem"/>
</dbReference>
<dbReference type="PRO" id="PR:Q15391"/>
<dbReference type="Proteomes" id="UP000005640">
    <property type="component" value="Chromosome 3"/>
</dbReference>
<dbReference type="RNAct" id="Q15391">
    <property type="molecule type" value="protein"/>
</dbReference>
<dbReference type="Bgee" id="ENSG00000174944">
    <property type="expression patterns" value="Expressed in decidua and 173 other cell types or tissues"/>
</dbReference>
<dbReference type="ExpressionAtlas" id="Q15391">
    <property type="expression patterns" value="baseline and differential"/>
</dbReference>
<dbReference type="GO" id="GO:0016020">
    <property type="term" value="C:membrane"/>
    <property type="evidence" value="ECO:0000303"/>
    <property type="project" value="UniProtKB"/>
</dbReference>
<dbReference type="GO" id="GO:0005886">
    <property type="term" value="C:plasma membrane"/>
    <property type="evidence" value="ECO:0000304"/>
    <property type="project" value="Reactome"/>
</dbReference>
<dbReference type="GO" id="GO:0045028">
    <property type="term" value="F:G protein-coupled purinergic nucleotide receptor activity"/>
    <property type="evidence" value="ECO:0000318"/>
    <property type="project" value="GO_Central"/>
</dbReference>
<dbReference type="GO" id="GO:0045029">
    <property type="term" value="F:G protein-coupled UDP receptor activity"/>
    <property type="evidence" value="ECO:0000303"/>
    <property type="project" value="UniProtKB"/>
</dbReference>
<dbReference type="GO" id="GO:0007186">
    <property type="term" value="P:G protein-coupled receptor signaling pathway"/>
    <property type="evidence" value="ECO:0000318"/>
    <property type="project" value="GO_Central"/>
</dbReference>
<dbReference type="GO" id="GO:0061484">
    <property type="term" value="P:hematopoietic stem cell homeostasis"/>
    <property type="evidence" value="ECO:0007669"/>
    <property type="project" value="Ensembl"/>
</dbReference>
<dbReference type="CDD" id="cd15149">
    <property type="entry name" value="7tmA_P2Y14"/>
    <property type="match status" value="1"/>
</dbReference>
<dbReference type="FunFam" id="1.20.1070.10:FF:000049">
    <property type="entry name" value="G-protein coupled receptor 87"/>
    <property type="match status" value="1"/>
</dbReference>
<dbReference type="Gene3D" id="1.20.1070.10">
    <property type="entry name" value="Rhodopsin 7-helix transmembrane proteins"/>
    <property type="match status" value="1"/>
</dbReference>
<dbReference type="InterPro" id="IPR000276">
    <property type="entry name" value="GPCR_Rhodpsn"/>
</dbReference>
<dbReference type="InterPro" id="IPR017452">
    <property type="entry name" value="GPCR_Rhodpsn_7TM"/>
</dbReference>
<dbReference type="InterPro" id="IPR005466">
    <property type="entry name" value="P2Y14_rcpt"/>
</dbReference>
<dbReference type="PANTHER" id="PTHR24233:SF3">
    <property type="entry name" value="P2Y PURINOCEPTOR 14"/>
    <property type="match status" value="1"/>
</dbReference>
<dbReference type="PANTHER" id="PTHR24233">
    <property type="entry name" value="P2Y PURINOCEPTOR-RELATED G-PROTEIN COUPLED RECEPTOR"/>
    <property type="match status" value="1"/>
</dbReference>
<dbReference type="Pfam" id="PF00001">
    <property type="entry name" value="7tm_1"/>
    <property type="match status" value="1"/>
</dbReference>
<dbReference type="PRINTS" id="PR00237">
    <property type="entry name" value="GPCRRHODOPSN"/>
</dbReference>
<dbReference type="PRINTS" id="PR01157">
    <property type="entry name" value="P2YPURNOCPTR"/>
</dbReference>
<dbReference type="PRINTS" id="PR01655">
    <property type="entry name" value="UDPGLUCOSER"/>
</dbReference>
<dbReference type="SUPFAM" id="SSF81321">
    <property type="entry name" value="Family A G protein-coupled receptor-like"/>
    <property type="match status" value="1"/>
</dbReference>
<dbReference type="PROSITE" id="PS50262">
    <property type="entry name" value="G_PROTEIN_RECEP_F1_2"/>
    <property type="match status" value="1"/>
</dbReference>
<comment type="function">
    <text evidence="3">Receptor for UDP-glucose and other UDP-sugar coupled to G-proteins. Not activated by ATP, ADP, UTP or ATP.</text>
</comment>
<comment type="subcellular location">
    <subcellularLocation>
        <location>Cell membrane</location>
        <topology>Multi-pass membrane protein</topology>
    </subcellularLocation>
</comment>
<comment type="tissue specificity">
    <text>Highest expression in the placenta, adipose tissue, stomach and intestine, intermediate levels in the brain, spleen, lung and heart, lowest levels in the kidney.</text>
</comment>
<comment type="similarity">
    <text evidence="2">Belongs to the G-protein coupled receptor 1 family.</text>
</comment>
<comment type="sequence caution" evidence="5">
    <conflict type="erroneous initiation">
        <sequence resource="EMBL-CDS" id="BAA02791"/>
    </conflict>
</comment>
<proteinExistence type="evidence at protein level"/>
<protein>
    <recommendedName>
        <fullName>P2Y purinoceptor 14</fullName>
        <shortName>P2Y14</shortName>
    </recommendedName>
    <alternativeName>
        <fullName>G-protein coupled receptor 105</fullName>
    </alternativeName>
    <alternativeName>
        <fullName>UDP-glucose receptor</fullName>
    </alternativeName>
</protein>